<accession>Q830U4</accession>
<evidence type="ECO:0000255" key="1">
    <source>
        <dbReference type="HAMAP-Rule" id="MF_01124"/>
    </source>
</evidence>
<proteinExistence type="inferred from homology"/>
<dbReference type="EMBL" id="AE016830">
    <property type="protein sequence ID" value="AAO82382.1"/>
    <property type="molecule type" value="Genomic_DNA"/>
</dbReference>
<dbReference type="RefSeq" id="NP_816312.1">
    <property type="nucleotide sequence ID" value="NC_004668.1"/>
</dbReference>
<dbReference type="RefSeq" id="WP_002356478.1">
    <property type="nucleotide sequence ID" value="NZ_KE136528.1"/>
</dbReference>
<dbReference type="SMR" id="Q830U4"/>
<dbReference type="STRING" id="226185.EF_2677"/>
<dbReference type="EnsemblBacteria" id="AAO82382">
    <property type="protein sequence ID" value="AAO82382"/>
    <property type="gene ID" value="EF_2677"/>
</dbReference>
<dbReference type="KEGG" id="efa:EF2677"/>
<dbReference type="PATRIC" id="fig|226185.45.peg.885"/>
<dbReference type="eggNOG" id="COG4862">
    <property type="taxonomic scope" value="Bacteria"/>
</dbReference>
<dbReference type="HOGENOM" id="CLU_071496_2_0_9"/>
<dbReference type="Proteomes" id="UP000001415">
    <property type="component" value="Chromosome"/>
</dbReference>
<dbReference type="GO" id="GO:0030674">
    <property type="term" value="F:protein-macromolecule adaptor activity"/>
    <property type="evidence" value="ECO:0007669"/>
    <property type="project" value="UniProtKB-UniRule"/>
</dbReference>
<dbReference type="Gene3D" id="3.30.70.1950">
    <property type="match status" value="1"/>
</dbReference>
<dbReference type="HAMAP" id="MF_01124">
    <property type="entry name" value="MecA"/>
    <property type="match status" value="1"/>
</dbReference>
<dbReference type="InterPro" id="IPR038471">
    <property type="entry name" value="MecA_C_sf"/>
</dbReference>
<dbReference type="InterPro" id="IPR008681">
    <property type="entry name" value="Neg-reg_MecA"/>
</dbReference>
<dbReference type="PANTHER" id="PTHR39161">
    <property type="entry name" value="ADAPTER PROTEIN MECA"/>
    <property type="match status" value="1"/>
</dbReference>
<dbReference type="PANTHER" id="PTHR39161:SF1">
    <property type="entry name" value="ADAPTER PROTEIN MECA 1"/>
    <property type="match status" value="1"/>
</dbReference>
<dbReference type="Pfam" id="PF05389">
    <property type="entry name" value="MecA"/>
    <property type="match status" value="1"/>
</dbReference>
<dbReference type="PIRSF" id="PIRSF029008">
    <property type="entry name" value="MecA"/>
    <property type="match status" value="1"/>
</dbReference>
<keyword id="KW-1185">Reference proteome</keyword>
<sequence length="220" mass="25345">MEMEHINENTIRVLIGNEDLADRGITFLDLLGNHKDVENFFYSILEEVDVEDEFQGSEAVTFQVLPKNDGLELFISKNVAMDDLSSLEGLSEVNADVSELIRKQIEADKAAADELDEMEATDETNRNVIFELDNFEAMIQLSKEVFMQSVLTNLYTYNDRYYLQVLFLTDELEKTNVDNEIAQILEFAHKTTVTQDTLVEYGTCIMERSALELTRYYFND</sequence>
<name>MECA_ENTFA</name>
<feature type="chain" id="PRO_0000212269" description="Adapter protein MecA">
    <location>
        <begin position="1"/>
        <end position="220"/>
    </location>
</feature>
<protein>
    <recommendedName>
        <fullName evidence="1">Adapter protein MecA</fullName>
    </recommendedName>
</protein>
<organism>
    <name type="scientific">Enterococcus faecalis (strain ATCC 700802 / V583)</name>
    <dbReference type="NCBI Taxonomy" id="226185"/>
    <lineage>
        <taxon>Bacteria</taxon>
        <taxon>Bacillati</taxon>
        <taxon>Bacillota</taxon>
        <taxon>Bacilli</taxon>
        <taxon>Lactobacillales</taxon>
        <taxon>Enterococcaceae</taxon>
        <taxon>Enterococcus</taxon>
    </lineage>
</organism>
<comment type="function">
    <text evidence="1">Enables the recognition and targeting of unfolded and aggregated proteins to the ClpC protease or to other proteins involved in proteolysis.</text>
</comment>
<comment type="subunit">
    <text evidence="1">Homodimer.</text>
</comment>
<comment type="domain">
    <text>The N-terminal domain probably binds unfolded/aggregated proteins; the C-terminal domain interacts with ClpC.</text>
</comment>
<comment type="similarity">
    <text evidence="1">Belongs to the MecA family.</text>
</comment>
<gene>
    <name evidence="1" type="primary">mecA</name>
    <name type="ordered locus">EF_2677</name>
</gene>
<reference key="1">
    <citation type="journal article" date="2003" name="Science">
        <title>Role of mobile DNA in the evolution of vancomycin-resistant Enterococcus faecalis.</title>
        <authorList>
            <person name="Paulsen I.T."/>
            <person name="Banerjei L."/>
            <person name="Myers G.S.A."/>
            <person name="Nelson K.E."/>
            <person name="Seshadri R."/>
            <person name="Read T.D."/>
            <person name="Fouts D.E."/>
            <person name="Eisen J.A."/>
            <person name="Gill S.R."/>
            <person name="Heidelberg J.F."/>
            <person name="Tettelin H."/>
            <person name="Dodson R.J."/>
            <person name="Umayam L.A."/>
            <person name="Brinkac L.M."/>
            <person name="Beanan M.J."/>
            <person name="Daugherty S.C."/>
            <person name="DeBoy R.T."/>
            <person name="Durkin S.A."/>
            <person name="Kolonay J.F."/>
            <person name="Madupu R."/>
            <person name="Nelson W.C."/>
            <person name="Vamathevan J.J."/>
            <person name="Tran B."/>
            <person name="Upton J."/>
            <person name="Hansen T."/>
            <person name="Shetty J."/>
            <person name="Khouri H.M."/>
            <person name="Utterback T.R."/>
            <person name="Radune D."/>
            <person name="Ketchum K.A."/>
            <person name="Dougherty B.A."/>
            <person name="Fraser C.M."/>
        </authorList>
    </citation>
    <scope>NUCLEOTIDE SEQUENCE [LARGE SCALE GENOMIC DNA]</scope>
    <source>
        <strain>ATCC 700802 / V583</strain>
    </source>
</reference>